<dbReference type="EMBL" id="X01999">
    <property type="protein sequence ID" value="CAA26031.1"/>
    <property type="status" value="ALT_SEQ"/>
    <property type="molecule type" value="mRNA"/>
</dbReference>
<dbReference type="EMBL" id="K01711">
    <property type="protein sequence ID" value="AAA75494.1"/>
    <property type="molecule type" value="Genomic_RNA"/>
</dbReference>
<dbReference type="EMBL" id="AF266288">
    <property type="protein sequence ID" value="AAF85675.1"/>
    <property type="molecule type" value="Genomic_RNA"/>
</dbReference>
<dbReference type="EMBL" id="AF266289">
    <property type="protein sequence ID" value="AAF85683.1"/>
    <property type="molecule type" value="Genomic_RNA"/>
</dbReference>
<dbReference type="PIR" id="A04027">
    <property type="entry name" value="VHNZMV"/>
</dbReference>
<dbReference type="SMR" id="P04851"/>
<dbReference type="Proteomes" id="UP000000833">
    <property type="component" value="Genome"/>
</dbReference>
<dbReference type="Proteomes" id="UP000141942">
    <property type="component" value="Genome"/>
</dbReference>
<dbReference type="Proteomes" id="UP000144315">
    <property type="component" value="Segment"/>
</dbReference>
<dbReference type="GO" id="GO:0019029">
    <property type="term" value="C:helical viral capsid"/>
    <property type="evidence" value="ECO:0007669"/>
    <property type="project" value="UniProtKB-KW"/>
</dbReference>
<dbReference type="GO" id="GO:0030430">
    <property type="term" value="C:host cell cytoplasm"/>
    <property type="evidence" value="ECO:0007669"/>
    <property type="project" value="UniProtKB-SubCell"/>
</dbReference>
<dbReference type="GO" id="GO:0042025">
    <property type="term" value="C:host cell nucleus"/>
    <property type="evidence" value="ECO:0007669"/>
    <property type="project" value="UniProtKB-SubCell"/>
</dbReference>
<dbReference type="GO" id="GO:1990904">
    <property type="term" value="C:ribonucleoprotein complex"/>
    <property type="evidence" value="ECO:0007669"/>
    <property type="project" value="UniProtKB-KW"/>
</dbReference>
<dbReference type="GO" id="GO:0019013">
    <property type="term" value="C:viral nucleocapsid"/>
    <property type="evidence" value="ECO:0000314"/>
    <property type="project" value="CACAO"/>
</dbReference>
<dbReference type="GO" id="GO:0003723">
    <property type="term" value="F:RNA binding"/>
    <property type="evidence" value="ECO:0007669"/>
    <property type="project" value="UniProtKB-KW"/>
</dbReference>
<dbReference type="GO" id="GO:0005198">
    <property type="term" value="F:structural molecule activity"/>
    <property type="evidence" value="ECO:0007669"/>
    <property type="project" value="InterPro"/>
</dbReference>
<dbReference type="InterPro" id="IPR002021">
    <property type="entry name" value="Paramyx_ncap"/>
</dbReference>
<dbReference type="Pfam" id="PF00973">
    <property type="entry name" value="Paramyxo_ncap"/>
    <property type="match status" value="1"/>
</dbReference>
<organism>
    <name type="scientific">Measles virus (strain Edmonston)</name>
    <name type="common">MeV</name>
    <name type="synonym">Subacute sclerose panencephalitis virus</name>
    <dbReference type="NCBI Taxonomy" id="11235"/>
    <lineage>
        <taxon>Viruses</taxon>
        <taxon>Riboviria</taxon>
        <taxon>Orthornavirae</taxon>
        <taxon>Negarnaviricota</taxon>
        <taxon>Haploviricotina</taxon>
        <taxon>Monjiviricetes</taxon>
        <taxon>Mononegavirales</taxon>
        <taxon>Paramyxoviridae</taxon>
        <taxon>Orthoparamyxovirinae</taxon>
        <taxon>Morbillivirus</taxon>
        <taxon>Morbillivirus hominis</taxon>
        <taxon>Measles morbillivirus</taxon>
    </lineage>
</organism>
<sequence>MATLLRSLALFKRNKDKPPITSGSGGAIRGIKHIIIVPIPGDSSITTRSRLLDRLVRLIGNPDVSGPKLTGALIGILSLFVESPGQLIQRITDDPDVSIRLLEVVQSDQSQSGLTFASRGTNMEDEADQYFSHDDPISSDQSRFGWFENKEISDIEVQDPEGFNMILGTILAQIWVLLAKAVTAPDTAADSELRRWIKYTQQRRVVGEFRLERKWLDVVRNIIAEDLSLRRFMVALILDIKRTPGNKPRIAEMICDIDTYIVEAGLASFILTIKFGIETMYPALGLHEFAGELSTLESLMNLYQQMGKPAPYMVNLENSIQNKFSAGSYPLLWSYAMGVGVELENSMGGLNFGRSYFDPAYFRLGQEMVRRSAGKVSSTLASELGITAEDARLVSEIAMHTTEDKISRAVGPRQAQVSFLQGDQSENELPRLGGKEDRRVKQSRGEARESYRETGPSRASDARAAHLPTGTPLDIDTASESSQDPQDSRRSAEPLLRLQAMAGISEEQGSDTDTPTVYNDRNLLD</sequence>
<proteinExistence type="evidence at protein level"/>
<comment type="function">
    <text evidence="2 3 4 8">Forms the helical nucleocapsid (NC) in a ratio of 1 N per 6 ribonucleotides, protecting the genome from nucleases (By similarity). The nucleocapsid (NC) has a helical structure with either 12.35 or 11.64 N per turn, approximately 20 nm in diameter, with a hollow central cavity approximately 5 nm in diameter (By similarity). The encapsidated genomic RNA serves as template for transcription and replication; encapsidation by N is coupled to RNA synthesis (By similarity). Forms the encapsidation complex with the phosphoprotein protein P (By similarity). Before encapsidation, the newly synthesized free N protein, so-called N0, is chaperoned by P (By similarity). Participates, together with P, in the formation of viral factories (viroplasms), which are large inclusions in the host cytoplasm where replication takes place (By similarity). N is released in the blood following lysis of measles infected cells, it interacts then with human FCGR2B on immune cells, inducing apoptosis and blocking inflammatory immune response (By similarity).</text>
</comment>
<comment type="subunit">
    <text evidence="1 2 3 5 6 7 8 11">Homomultimer; forms the nucleocapsid (By similarity). Binds to viral genomic RNA (By similarity). N0 interacts (via Ncore) with the phosphoprotein (via N-terminus); this interaction allows P to chaperon N0 to avoid N polymerization and non-specific RNA binding before encapsidation (By similarity). Interacts as N-RNA template (via the Ntail) with the phosphoprotein (via C-terminus XD); this interaction maintains the P/L complex anchored to the nucleocapsid template during the sequential transcription (PubMed:27936158). Interacts with the phosphoprotein; this interaction leads to the formation of membraneless organelles that function as viral replication factories (By similarity). Interacts with human FCGR2B protein (By similarity). Interacts with human PPIA/CYPA and PPIB/CYPB (By similarity).</text>
</comment>
<comment type="subcellular location">
    <subcellularLocation>
        <location evidence="12">Virion</location>
    </subcellularLocation>
    <subcellularLocation>
        <location evidence="10">Host cytoplasm</location>
    </subcellularLocation>
    <subcellularLocation>
        <location evidence="10">Host nucleus</location>
    </subcellularLocation>
</comment>
<comment type="domain">
    <text evidence="7">Ncore is globular and carries regions required for N self-assembly and RNA-binding. Ntail is an intrinsically disordered monomeric domain in the C-terminus.</text>
</comment>
<comment type="PTM">
    <text evidence="8">Phosphorylation at Thr-279 is required for the formation of the nucleocapsid.</text>
</comment>
<comment type="similarity">
    <text evidence="12">Belongs to the paramyxoviruses nucleocapsid family.</text>
</comment>
<protein>
    <recommendedName>
        <fullName>Nucleoprotein</fullName>
    </recommendedName>
    <alternativeName>
        <fullName>Nucleocapsid protein</fullName>
        <shortName>NP</shortName>
        <shortName>Protein N</shortName>
    </alternativeName>
</protein>
<gene>
    <name type="primary">N</name>
    <name type="synonym">NP</name>
</gene>
<feature type="chain" id="PRO_0000142654" description="Nucleoprotein">
    <location>
        <begin position="1"/>
        <end position="525"/>
    </location>
</feature>
<feature type="region of interest" description="Ncore" evidence="2">
    <location>
        <begin position="1"/>
        <end position="403"/>
    </location>
</feature>
<feature type="region of interest" description="RNA packaging and organization of the helical nucleocapsid" evidence="7">
    <location>
        <begin position="1"/>
        <end position="375"/>
    </location>
</feature>
<feature type="region of interest" description="Homomultimerization" evidence="4">
    <location>
        <begin position="1"/>
        <end position="36"/>
    </location>
</feature>
<feature type="region of interest" description="Homomultimerization" evidence="4">
    <location>
        <begin position="373"/>
        <end position="391"/>
    </location>
</feature>
<feature type="region of interest" description="Ntail" evidence="2">
    <location>
        <begin position="404"/>
        <end position="525"/>
    </location>
</feature>
<feature type="region of interest" description="Disordered" evidence="9">
    <location>
        <begin position="418"/>
        <end position="525"/>
    </location>
</feature>
<feature type="region of interest" description="Interaction with the phosphoprotein" evidence="6">
    <location>
        <begin position="477"/>
        <end position="505"/>
    </location>
</feature>
<feature type="short sequence motif" description="Nuclear localization signal" evidence="10">
    <location>
        <begin position="70"/>
        <end position="77"/>
    </location>
</feature>
<feature type="short sequence motif" description="Nuclear export signal" evidence="10">
    <location>
        <begin position="425"/>
        <end position="440"/>
    </location>
</feature>
<feature type="compositionally biased region" description="Basic and acidic residues" evidence="9">
    <location>
        <begin position="433"/>
        <end position="452"/>
    </location>
</feature>
<feature type="binding site" evidence="6">
    <location>
        <position position="180"/>
    </location>
    <ligand>
        <name>RNA</name>
        <dbReference type="ChEBI" id="CHEBI:33697"/>
    </ligand>
</feature>
<feature type="binding site" evidence="6">
    <location>
        <position position="195"/>
    </location>
    <ligand>
        <name>RNA</name>
        <dbReference type="ChEBI" id="CHEBI:33697"/>
    </ligand>
</feature>
<feature type="binding site" evidence="6">
    <location>
        <position position="202"/>
    </location>
    <ligand>
        <name>RNA</name>
        <dbReference type="ChEBI" id="CHEBI:33697"/>
    </ligand>
</feature>
<feature type="binding site" evidence="6">
    <location>
        <position position="260"/>
    </location>
    <ligand>
        <name>RNA</name>
        <dbReference type="ChEBI" id="CHEBI:33697"/>
    </ligand>
</feature>
<feature type="binding site" evidence="6">
    <location>
        <position position="351"/>
    </location>
    <ligand>
        <name>RNA</name>
        <dbReference type="ChEBI" id="CHEBI:33697"/>
    </ligand>
</feature>
<feature type="modified residue" description="Phosphothreonine; by host" evidence="8">
    <location>
        <position position="279"/>
    </location>
</feature>
<feature type="sequence variant">
    <original>I</original>
    <variation>R</variation>
    <location>
        <position position="222"/>
    </location>
</feature>
<feature type="sequence variant">
    <original>KP</original>
    <variation>ET</variation>
    <location>
        <begin position="308"/>
        <end position="309"/>
    </location>
</feature>
<feature type="sequence variant">
    <original>N</original>
    <variation>I</variation>
    <location>
        <position position="315"/>
    </location>
</feature>
<feature type="sequence variant">
    <original>Q</original>
    <variation>H</variation>
    <location>
        <position position="421"/>
    </location>
</feature>
<feature type="sequence variant">
    <original>S</original>
    <variation>T</variation>
    <location>
        <position position="479"/>
    </location>
</feature>
<feature type="sequence variant">
    <original>EP</original>
    <variation>DA</variation>
    <location>
        <begin position="493"/>
        <end position="494"/>
    </location>
</feature>
<feature type="sequence variant">
    <original>T</original>
    <variation>I</variation>
    <location>
        <position position="516"/>
    </location>
</feature>
<organismHost>
    <name type="scientific">Homo sapiens</name>
    <name type="common">Human</name>
    <dbReference type="NCBI Taxonomy" id="9606"/>
</organismHost>
<reference key="1">
    <citation type="journal article" date="1985" name="J. Virol.">
        <title>Sequence homology within the morbilliviruses.</title>
        <authorList>
            <person name="Rozenblatt S."/>
            <person name="Eizenberg O."/>
            <person name="Ben-Levy R."/>
            <person name="Lavie V."/>
            <person name="Bellini W.J."/>
        </authorList>
    </citation>
    <scope>NUCLEOTIDE SEQUENCE [MRNA]</scope>
</reference>
<reference key="2">
    <citation type="journal article" date="1984" name="Virology">
        <title>Cloning of DNA corresponding to four different measles virus genomic regions.</title>
        <authorList>
            <person name="Billeter M.A."/>
            <person name="Baczko K."/>
            <person name="Schmid A."/>
            <person name="Ter Meulen V."/>
        </authorList>
    </citation>
    <scope>NUCLEOTIDE SEQUENCE [GENOMIC RNA] OF 1-165</scope>
</reference>
<reference key="3">
    <citation type="journal article" date="2001" name="J. Virol.">
        <title>Comparison of predicted amino acid sequences of measles virus strains in the Edmonston vaccine lineage.</title>
        <authorList>
            <person name="Parks C.L."/>
            <person name="Lerch R.A."/>
            <person name="Walpita P."/>
            <person name="Wang H.P."/>
            <person name="Sidhu M.S."/>
            <person name="Udem S.A."/>
        </authorList>
    </citation>
    <scope>NUCLEOTIDE SEQUENCE [GENOMIC RNA]</scope>
</reference>
<reference key="4">
    <citation type="journal article" date="2006" name="Virology">
        <title>Morbillivirus nucleoprotein possesses a novel nuclear localization signal and a CRM1-independent nuclear export signal.</title>
        <authorList>
            <person name="Sato H."/>
            <person name="Masuda M."/>
            <person name="Miura R."/>
            <person name="Yoneda M."/>
            <person name="Kai C."/>
        </authorList>
    </citation>
    <scope>SUBCELLULAR LOCATION</scope>
    <scope>NUCLEAR LOCALIZATION SIGNAL</scope>
    <scope>NUCLEAR EXPORT SIGNAL</scope>
</reference>
<reference key="5">
    <citation type="journal article" date="2016" name="PLoS Pathog.">
        <title>Modulation of Re-initiation of Measles Virus Transcription at Intergenic Regions by PXD to NTAIL Binding Strength.</title>
        <authorList>
            <person name="Bloyet L.M."/>
            <person name="Brunel J."/>
            <person name="Dosnon M."/>
            <person name="Hamon V."/>
            <person name="Erales J."/>
            <person name="Gruet A."/>
            <person name="Lazert C."/>
            <person name="Bignon C."/>
            <person name="Roche P."/>
            <person name="Longhi S."/>
            <person name="Gerlier D."/>
        </authorList>
    </citation>
    <scope>INTERACTION WITH THE PHOSPHOPROTEIN</scope>
</reference>
<evidence type="ECO:0000250" key="1">
    <source>
        <dbReference type="UniProtKB" id="O57286"/>
    </source>
</evidence>
<evidence type="ECO:0000250" key="2">
    <source>
        <dbReference type="UniProtKB" id="P06159"/>
    </source>
</evidence>
<evidence type="ECO:0000250" key="3">
    <source>
        <dbReference type="UniProtKB" id="P0DXN6"/>
    </source>
</evidence>
<evidence type="ECO:0000250" key="4">
    <source>
        <dbReference type="UniProtKB" id="P10050"/>
    </source>
</evidence>
<evidence type="ECO:0000250" key="5">
    <source>
        <dbReference type="UniProtKB" id="Q07097"/>
    </source>
</evidence>
<evidence type="ECO:0000250" key="6">
    <source>
        <dbReference type="UniProtKB" id="Q77M43"/>
    </source>
</evidence>
<evidence type="ECO:0000250" key="7">
    <source>
        <dbReference type="UniProtKB" id="Q89933"/>
    </source>
</evidence>
<evidence type="ECO:0000250" key="8">
    <source>
        <dbReference type="UniProtKB" id="Q9WMB5"/>
    </source>
</evidence>
<evidence type="ECO:0000256" key="9">
    <source>
        <dbReference type="SAM" id="MobiDB-lite"/>
    </source>
</evidence>
<evidence type="ECO:0000269" key="10">
    <source>
    </source>
</evidence>
<evidence type="ECO:0000269" key="11">
    <source>
    </source>
</evidence>
<evidence type="ECO:0000305" key="12"/>
<accession>P04851</accession>
<keyword id="KW-0167">Capsid protein</keyword>
<keyword id="KW-1139">Helical capsid protein</keyword>
<keyword id="KW-1035">Host cytoplasm</keyword>
<keyword id="KW-1048">Host nucleus</keyword>
<keyword id="KW-0945">Host-virus interaction</keyword>
<keyword id="KW-0597">Phosphoprotein</keyword>
<keyword id="KW-0687">Ribonucleoprotein</keyword>
<keyword id="KW-0694">RNA-binding</keyword>
<keyword id="KW-0543">Viral nucleoprotein</keyword>
<keyword id="KW-0946">Virion</keyword>
<name>NCAP_MEASE</name>